<sequence>MNTVKTVRELRAAVARARSEGKRIGFVPTMGNLHSGHAALVAKAAQRVDFVVASIFVNPLQFGAGEDLDKYPRTLAADQEKLLEAGCHLLFAPTVEEMYPDGMAGQTRVSVPQLSEGLCGASRPGHFEGVATVVSKLFNMVQPDLAVFGQKDYQQLAVIRALVHDLNMPIQIIGEPTVRAADGLALSSRNGYLSEEQRAIAPVLYRSLSQIAQAIRNGERDYPKLVAEQQQQLEAAGLRRDYLEIRQAQNLRPATAQDRELVILVAAYLGATRLIDNLHLDLDTPA</sequence>
<proteinExistence type="inferred from homology"/>
<evidence type="ECO:0000255" key="1">
    <source>
        <dbReference type="HAMAP-Rule" id="MF_00158"/>
    </source>
</evidence>
<dbReference type="EC" id="6.3.2.1" evidence="1"/>
<dbReference type="EMBL" id="CP000076">
    <property type="protein sequence ID" value="AAY94492.1"/>
    <property type="molecule type" value="Genomic_DNA"/>
</dbReference>
<dbReference type="RefSeq" id="WP_011063512.1">
    <property type="nucleotide sequence ID" value="NC_004129.6"/>
</dbReference>
<dbReference type="SMR" id="Q4K5Y3"/>
<dbReference type="STRING" id="220664.PFL_5278"/>
<dbReference type="GeneID" id="57478246"/>
<dbReference type="KEGG" id="pfl:PFL_5278"/>
<dbReference type="PATRIC" id="fig|220664.5.peg.5390"/>
<dbReference type="eggNOG" id="COG0414">
    <property type="taxonomic scope" value="Bacteria"/>
</dbReference>
<dbReference type="HOGENOM" id="CLU_047148_0_0_6"/>
<dbReference type="UniPathway" id="UPA00028">
    <property type="reaction ID" value="UER00005"/>
</dbReference>
<dbReference type="Proteomes" id="UP000008540">
    <property type="component" value="Chromosome"/>
</dbReference>
<dbReference type="GO" id="GO:0005829">
    <property type="term" value="C:cytosol"/>
    <property type="evidence" value="ECO:0007669"/>
    <property type="project" value="TreeGrafter"/>
</dbReference>
<dbReference type="GO" id="GO:0005524">
    <property type="term" value="F:ATP binding"/>
    <property type="evidence" value="ECO:0007669"/>
    <property type="project" value="UniProtKB-KW"/>
</dbReference>
<dbReference type="GO" id="GO:0004592">
    <property type="term" value="F:pantoate-beta-alanine ligase activity"/>
    <property type="evidence" value="ECO:0007669"/>
    <property type="project" value="UniProtKB-UniRule"/>
</dbReference>
<dbReference type="GO" id="GO:0015940">
    <property type="term" value="P:pantothenate biosynthetic process"/>
    <property type="evidence" value="ECO:0007669"/>
    <property type="project" value="UniProtKB-UniRule"/>
</dbReference>
<dbReference type="CDD" id="cd00560">
    <property type="entry name" value="PanC"/>
    <property type="match status" value="1"/>
</dbReference>
<dbReference type="FunFam" id="3.30.1300.10:FF:000001">
    <property type="entry name" value="Pantothenate synthetase"/>
    <property type="match status" value="1"/>
</dbReference>
<dbReference type="FunFam" id="3.40.50.620:FF:000013">
    <property type="entry name" value="Pantothenate synthetase"/>
    <property type="match status" value="1"/>
</dbReference>
<dbReference type="Gene3D" id="3.40.50.620">
    <property type="entry name" value="HUPs"/>
    <property type="match status" value="1"/>
</dbReference>
<dbReference type="Gene3D" id="3.30.1300.10">
    <property type="entry name" value="Pantoate-beta-alanine ligase, C-terminal domain"/>
    <property type="match status" value="1"/>
</dbReference>
<dbReference type="HAMAP" id="MF_00158">
    <property type="entry name" value="PanC"/>
    <property type="match status" value="1"/>
</dbReference>
<dbReference type="InterPro" id="IPR003721">
    <property type="entry name" value="Pantoate_ligase"/>
</dbReference>
<dbReference type="InterPro" id="IPR042176">
    <property type="entry name" value="Pantoate_ligase_C"/>
</dbReference>
<dbReference type="InterPro" id="IPR014729">
    <property type="entry name" value="Rossmann-like_a/b/a_fold"/>
</dbReference>
<dbReference type="NCBIfam" id="TIGR00018">
    <property type="entry name" value="panC"/>
    <property type="match status" value="1"/>
</dbReference>
<dbReference type="PANTHER" id="PTHR21299">
    <property type="entry name" value="CYTIDYLATE KINASE/PANTOATE-BETA-ALANINE LIGASE"/>
    <property type="match status" value="1"/>
</dbReference>
<dbReference type="PANTHER" id="PTHR21299:SF1">
    <property type="entry name" value="PANTOATE--BETA-ALANINE LIGASE"/>
    <property type="match status" value="1"/>
</dbReference>
<dbReference type="Pfam" id="PF02569">
    <property type="entry name" value="Pantoate_ligase"/>
    <property type="match status" value="1"/>
</dbReference>
<dbReference type="SUPFAM" id="SSF52374">
    <property type="entry name" value="Nucleotidylyl transferase"/>
    <property type="match status" value="1"/>
</dbReference>
<comment type="function">
    <text evidence="1">Catalyzes the condensation of pantoate with beta-alanine in an ATP-dependent reaction via a pantoyl-adenylate intermediate.</text>
</comment>
<comment type="catalytic activity">
    <reaction evidence="1">
        <text>(R)-pantoate + beta-alanine + ATP = (R)-pantothenate + AMP + diphosphate + H(+)</text>
        <dbReference type="Rhea" id="RHEA:10912"/>
        <dbReference type="ChEBI" id="CHEBI:15378"/>
        <dbReference type="ChEBI" id="CHEBI:15980"/>
        <dbReference type="ChEBI" id="CHEBI:29032"/>
        <dbReference type="ChEBI" id="CHEBI:30616"/>
        <dbReference type="ChEBI" id="CHEBI:33019"/>
        <dbReference type="ChEBI" id="CHEBI:57966"/>
        <dbReference type="ChEBI" id="CHEBI:456215"/>
        <dbReference type="EC" id="6.3.2.1"/>
    </reaction>
</comment>
<comment type="pathway">
    <text evidence="1">Cofactor biosynthesis; (R)-pantothenate biosynthesis; (R)-pantothenate from (R)-pantoate and beta-alanine: step 1/1.</text>
</comment>
<comment type="subunit">
    <text evidence="1">Homodimer.</text>
</comment>
<comment type="subcellular location">
    <subcellularLocation>
        <location evidence="1">Cytoplasm</location>
    </subcellularLocation>
</comment>
<comment type="miscellaneous">
    <text evidence="1">The reaction proceeds by a bi uni uni bi ping pong mechanism.</text>
</comment>
<comment type="similarity">
    <text evidence="1">Belongs to the pantothenate synthetase family.</text>
</comment>
<name>PANC_PSEF5</name>
<keyword id="KW-0067">ATP-binding</keyword>
<keyword id="KW-0963">Cytoplasm</keyword>
<keyword id="KW-0436">Ligase</keyword>
<keyword id="KW-0547">Nucleotide-binding</keyword>
<keyword id="KW-0566">Pantothenate biosynthesis</keyword>
<gene>
    <name evidence="1" type="primary">panC</name>
    <name type="ordered locus">PFL_5278</name>
</gene>
<organism>
    <name type="scientific">Pseudomonas fluorescens (strain ATCC BAA-477 / NRRL B-23932 / Pf-5)</name>
    <dbReference type="NCBI Taxonomy" id="220664"/>
    <lineage>
        <taxon>Bacteria</taxon>
        <taxon>Pseudomonadati</taxon>
        <taxon>Pseudomonadota</taxon>
        <taxon>Gammaproteobacteria</taxon>
        <taxon>Pseudomonadales</taxon>
        <taxon>Pseudomonadaceae</taxon>
        <taxon>Pseudomonas</taxon>
    </lineage>
</organism>
<reference key="1">
    <citation type="journal article" date="2005" name="Nat. Biotechnol.">
        <title>Complete genome sequence of the plant commensal Pseudomonas fluorescens Pf-5.</title>
        <authorList>
            <person name="Paulsen I.T."/>
            <person name="Press C.M."/>
            <person name="Ravel J."/>
            <person name="Kobayashi D.Y."/>
            <person name="Myers G.S.A."/>
            <person name="Mavrodi D.V."/>
            <person name="DeBoy R.T."/>
            <person name="Seshadri R."/>
            <person name="Ren Q."/>
            <person name="Madupu R."/>
            <person name="Dodson R.J."/>
            <person name="Durkin A.S."/>
            <person name="Brinkac L.M."/>
            <person name="Daugherty S.C."/>
            <person name="Sullivan S.A."/>
            <person name="Rosovitz M.J."/>
            <person name="Gwinn M.L."/>
            <person name="Zhou L."/>
            <person name="Schneider D.J."/>
            <person name="Cartinhour S.W."/>
            <person name="Nelson W.C."/>
            <person name="Weidman J."/>
            <person name="Watkins K."/>
            <person name="Tran K."/>
            <person name="Khouri H."/>
            <person name="Pierson E.A."/>
            <person name="Pierson L.S. III"/>
            <person name="Thomashow L.S."/>
            <person name="Loper J.E."/>
        </authorList>
    </citation>
    <scope>NUCLEOTIDE SEQUENCE [LARGE SCALE GENOMIC DNA]</scope>
    <source>
        <strain>ATCC BAA-477 / NRRL B-23932 / Pf-5</strain>
    </source>
</reference>
<protein>
    <recommendedName>
        <fullName evidence="1">Pantothenate synthetase</fullName>
        <shortName evidence="1">PS</shortName>
        <ecNumber evidence="1">6.3.2.1</ecNumber>
    </recommendedName>
    <alternativeName>
        <fullName evidence="1">Pantoate--beta-alanine ligase</fullName>
    </alternativeName>
    <alternativeName>
        <fullName evidence="1">Pantoate-activating enzyme</fullName>
    </alternativeName>
</protein>
<feature type="chain" id="PRO_0000128256" description="Pantothenate synthetase">
    <location>
        <begin position="1"/>
        <end position="286"/>
    </location>
</feature>
<feature type="active site" description="Proton donor" evidence="1">
    <location>
        <position position="37"/>
    </location>
</feature>
<feature type="binding site" evidence="1">
    <location>
        <begin position="30"/>
        <end position="37"/>
    </location>
    <ligand>
        <name>ATP</name>
        <dbReference type="ChEBI" id="CHEBI:30616"/>
    </ligand>
</feature>
<feature type="binding site" evidence="1">
    <location>
        <position position="61"/>
    </location>
    <ligand>
        <name>(R)-pantoate</name>
        <dbReference type="ChEBI" id="CHEBI:15980"/>
    </ligand>
</feature>
<feature type="binding site" evidence="1">
    <location>
        <position position="61"/>
    </location>
    <ligand>
        <name>beta-alanine</name>
        <dbReference type="ChEBI" id="CHEBI:57966"/>
    </ligand>
</feature>
<feature type="binding site" evidence="1">
    <location>
        <begin position="149"/>
        <end position="152"/>
    </location>
    <ligand>
        <name>ATP</name>
        <dbReference type="ChEBI" id="CHEBI:30616"/>
    </ligand>
</feature>
<feature type="binding site" evidence="1">
    <location>
        <position position="155"/>
    </location>
    <ligand>
        <name>(R)-pantoate</name>
        <dbReference type="ChEBI" id="CHEBI:15980"/>
    </ligand>
</feature>
<feature type="binding site" evidence="1">
    <location>
        <position position="178"/>
    </location>
    <ligand>
        <name>ATP</name>
        <dbReference type="ChEBI" id="CHEBI:30616"/>
    </ligand>
</feature>
<feature type="binding site" evidence="1">
    <location>
        <begin position="186"/>
        <end position="189"/>
    </location>
    <ligand>
        <name>ATP</name>
        <dbReference type="ChEBI" id="CHEBI:30616"/>
    </ligand>
</feature>
<accession>Q4K5Y3</accession>